<evidence type="ECO:0000255" key="1">
    <source>
        <dbReference type="HAMAP-Rule" id="MF_00071"/>
    </source>
</evidence>
<evidence type="ECO:0000256" key="2">
    <source>
        <dbReference type="SAM" id="MobiDB-lite"/>
    </source>
</evidence>
<keyword id="KW-1003">Cell membrane</keyword>
<keyword id="KW-0342">GTP-binding</keyword>
<keyword id="KW-0378">Hydrolase</keyword>
<keyword id="KW-0472">Membrane</keyword>
<keyword id="KW-0547">Nucleotide-binding</keyword>
<keyword id="KW-0648">Protein biosynthesis</keyword>
<comment type="function">
    <text evidence="1">Required for accurate and efficient protein synthesis under certain stress conditions. May act as a fidelity factor of the translation reaction, by catalyzing a one-codon backward translocation of tRNAs on improperly translocated ribosomes. Back-translocation proceeds from a post-translocation (POST) complex to a pre-translocation (PRE) complex, thus giving elongation factor G a second chance to translocate the tRNAs correctly. Binds to ribosomes in a GTP-dependent manner.</text>
</comment>
<comment type="catalytic activity">
    <reaction evidence="1">
        <text>GTP + H2O = GDP + phosphate + H(+)</text>
        <dbReference type="Rhea" id="RHEA:19669"/>
        <dbReference type="ChEBI" id="CHEBI:15377"/>
        <dbReference type="ChEBI" id="CHEBI:15378"/>
        <dbReference type="ChEBI" id="CHEBI:37565"/>
        <dbReference type="ChEBI" id="CHEBI:43474"/>
        <dbReference type="ChEBI" id="CHEBI:58189"/>
        <dbReference type="EC" id="3.6.5.n1"/>
    </reaction>
</comment>
<comment type="subcellular location">
    <subcellularLocation>
        <location evidence="1">Cell membrane</location>
        <topology evidence="1">Peripheral membrane protein</topology>
        <orientation evidence="1">Cytoplasmic side</orientation>
    </subcellularLocation>
</comment>
<comment type="similarity">
    <text evidence="1">Belongs to the TRAFAC class translation factor GTPase superfamily. Classic translation factor GTPase family. LepA subfamily.</text>
</comment>
<protein>
    <recommendedName>
        <fullName evidence="1">Elongation factor 4</fullName>
        <shortName evidence="1">EF-4</shortName>
        <ecNumber evidence="1">3.6.5.n1</ecNumber>
    </recommendedName>
    <alternativeName>
        <fullName evidence="1">Ribosomal back-translocase LepA</fullName>
    </alternativeName>
</protein>
<gene>
    <name evidence="1" type="primary">lepA</name>
    <name type="ordered locus">Blon_1486</name>
    <name type="ordered locus">BLIJ_1537</name>
</gene>
<organism>
    <name type="scientific">Bifidobacterium longum subsp. infantis (strain ATCC 15697 / DSM 20088 / JCM 1222 / NCTC 11817 / S12)</name>
    <dbReference type="NCBI Taxonomy" id="391904"/>
    <lineage>
        <taxon>Bacteria</taxon>
        <taxon>Bacillati</taxon>
        <taxon>Actinomycetota</taxon>
        <taxon>Actinomycetes</taxon>
        <taxon>Bifidobacteriales</taxon>
        <taxon>Bifidobacteriaceae</taxon>
        <taxon>Bifidobacterium</taxon>
    </lineage>
</organism>
<sequence>MVVQHNQPGSTDQSVIRNFCIIAHIDHGKSTVADRILQLSGIVPEREMRDRFLDRMDIEQERGITIKSQAVRVPWTFEGTEYTLGMIDTPGHVDFTYEVSRALAACEGAVLLVDATQGIEAQTLSNLYMAIDHDLAIIPVLNKIDLPSAEPDKHAEEIAGLIGCEPSDVLRVSGKTGEGVADLLDQIVMDVPAPHGDPDAPARALIFDSVYDSYRGIVTYIRMEDGELHDREKVHMMGIGMTHDPIEIGVISPDMTRTKALGAGEVGYIITGAKDVSQSKVGDTLTSAVRPATEPLPGYRDPKPMVYAGLFPIDNAQFPELRDALDKLKLNDAALIYTPETSVALGFGFRCGFLGLLHMEIVNERLSREFGLDLIQTAPNVTYDVTAEDGSQHHVTNPSEFPDGKIKKIVEPMVAADIITPKEFIGAVMDLCQDHRGIMGTMEYISTDRVEMHYRIPLAEIVFDFFDQLKSRTKGYASLDYHEDGEQSADLVKVDILIQGEKVDAFSAIVHRDKAYSYGVMMTKKLRSLIPRQQFEIPIQAAIGSRIIARENIRALRKDVLAKCYGGDITRKRKLLEKQKAGKKRMKMLGHVEVPQEAFIAALSTGEDSNDRDTKDKIRAAQKTEG</sequence>
<feature type="chain" id="PRO_1000118038" description="Elongation factor 4">
    <location>
        <begin position="1"/>
        <end position="626"/>
    </location>
</feature>
<feature type="domain" description="tr-type G">
    <location>
        <begin position="14"/>
        <end position="195"/>
    </location>
</feature>
<feature type="region of interest" description="Disordered" evidence="2">
    <location>
        <begin position="603"/>
        <end position="626"/>
    </location>
</feature>
<feature type="compositionally biased region" description="Basic and acidic residues" evidence="2">
    <location>
        <begin position="609"/>
        <end position="626"/>
    </location>
</feature>
<feature type="binding site" evidence="1">
    <location>
        <begin position="26"/>
        <end position="31"/>
    </location>
    <ligand>
        <name>GTP</name>
        <dbReference type="ChEBI" id="CHEBI:37565"/>
    </ligand>
</feature>
<feature type="binding site" evidence="1">
    <location>
        <begin position="142"/>
        <end position="145"/>
    </location>
    <ligand>
        <name>GTP</name>
        <dbReference type="ChEBI" id="CHEBI:37565"/>
    </ligand>
</feature>
<dbReference type="EC" id="3.6.5.n1" evidence="1"/>
<dbReference type="EMBL" id="CP001095">
    <property type="protein sequence ID" value="ACJ52567.1"/>
    <property type="molecule type" value="Genomic_DNA"/>
</dbReference>
<dbReference type="EMBL" id="AP010889">
    <property type="protein sequence ID" value="BAJ69119.1"/>
    <property type="molecule type" value="Genomic_DNA"/>
</dbReference>
<dbReference type="RefSeq" id="WP_012577806.1">
    <property type="nucleotide sequence ID" value="NC_011593.1"/>
</dbReference>
<dbReference type="SMR" id="B7GRY7"/>
<dbReference type="KEGG" id="bln:Blon_1486"/>
<dbReference type="KEGG" id="blon:BLIJ_1537"/>
<dbReference type="PATRIC" id="fig|391904.8.peg.1550"/>
<dbReference type="HOGENOM" id="CLU_009995_3_3_11"/>
<dbReference type="Proteomes" id="UP000001360">
    <property type="component" value="Chromosome"/>
</dbReference>
<dbReference type="GO" id="GO:0005886">
    <property type="term" value="C:plasma membrane"/>
    <property type="evidence" value="ECO:0007669"/>
    <property type="project" value="UniProtKB-SubCell"/>
</dbReference>
<dbReference type="GO" id="GO:0005525">
    <property type="term" value="F:GTP binding"/>
    <property type="evidence" value="ECO:0007669"/>
    <property type="project" value="UniProtKB-UniRule"/>
</dbReference>
<dbReference type="GO" id="GO:0003924">
    <property type="term" value="F:GTPase activity"/>
    <property type="evidence" value="ECO:0007669"/>
    <property type="project" value="UniProtKB-UniRule"/>
</dbReference>
<dbReference type="GO" id="GO:0043022">
    <property type="term" value="F:ribosome binding"/>
    <property type="evidence" value="ECO:0007669"/>
    <property type="project" value="UniProtKB-UniRule"/>
</dbReference>
<dbReference type="GO" id="GO:0003746">
    <property type="term" value="F:translation elongation factor activity"/>
    <property type="evidence" value="ECO:0007669"/>
    <property type="project" value="UniProtKB-UniRule"/>
</dbReference>
<dbReference type="GO" id="GO:0045727">
    <property type="term" value="P:positive regulation of translation"/>
    <property type="evidence" value="ECO:0007669"/>
    <property type="project" value="UniProtKB-UniRule"/>
</dbReference>
<dbReference type="CDD" id="cd03699">
    <property type="entry name" value="EF4_II"/>
    <property type="match status" value="1"/>
</dbReference>
<dbReference type="CDD" id="cd16260">
    <property type="entry name" value="EF4_III"/>
    <property type="match status" value="1"/>
</dbReference>
<dbReference type="CDD" id="cd01890">
    <property type="entry name" value="LepA"/>
    <property type="match status" value="1"/>
</dbReference>
<dbReference type="CDD" id="cd03709">
    <property type="entry name" value="lepA_C"/>
    <property type="match status" value="1"/>
</dbReference>
<dbReference type="FunFam" id="3.40.50.300:FF:000078">
    <property type="entry name" value="Elongation factor 4"/>
    <property type="match status" value="1"/>
</dbReference>
<dbReference type="FunFam" id="2.40.30.10:FF:000015">
    <property type="entry name" value="Translation factor GUF1, mitochondrial"/>
    <property type="match status" value="1"/>
</dbReference>
<dbReference type="FunFam" id="3.30.70.240:FF:000007">
    <property type="entry name" value="Translation factor GUF1, mitochondrial"/>
    <property type="match status" value="1"/>
</dbReference>
<dbReference type="FunFam" id="3.30.70.2570:FF:000001">
    <property type="entry name" value="Translation factor GUF1, mitochondrial"/>
    <property type="match status" value="1"/>
</dbReference>
<dbReference type="FunFam" id="3.30.70.870:FF:000004">
    <property type="entry name" value="Translation factor GUF1, mitochondrial"/>
    <property type="match status" value="1"/>
</dbReference>
<dbReference type="Gene3D" id="3.30.70.240">
    <property type="match status" value="1"/>
</dbReference>
<dbReference type="Gene3D" id="3.30.70.2570">
    <property type="entry name" value="Elongation factor 4, C-terminal domain"/>
    <property type="match status" value="1"/>
</dbReference>
<dbReference type="Gene3D" id="3.30.70.870">
    <property type="entry name" value="Elongation Factor G (Translational Gtpase), domain 3"/>
    <property type="match status" value="1"/>
</dbReference>
<dbReference type="Gene3D" id="3.40.50.300">
    <property type="entry name" value="P-loop containing nucleotide triphosphate hydrolases"/>
    <property type="match status" value="1"/>
</dbReference>
<dbReference type="Gene3D" id="2.40.30.10">
    <property type="entry name" value="Translation factors"/>
    <property type="match status" value="1"/>
</dbReference>
<dbReference type="HAMAP" id="MF_00071">
    <property type="entry name" value="LepA"/>
    <property type="match status" value="1"/>
</dbReference>
<dbReference type="InterPro" id="IPR006297">
    <property type="entry name" value="EF-4"/>
</dbReference>
<dbReference type="InterPro" id="IPR035647">
    <property type="entry name" value="EFG_III/V"/>
</dbReference>
<dbReference type="InterPro" id="IPR000640">
    <property type="entry name" value="EFG_V-like"/>
</dbReference>
<dbReference type="InterPro" id="IPR004161">
    <property type="entry name" value="EFTu-like_2"/>
</dbReference>
<dbReference type="InterPro" id="IPR031157">
    <property type="entry name" value="G_TR_CS"/>
</dbReference>
<dbReference type="InterPro" id="IPR038363">
    <property type="entry name" value="LepA_C_sf"/>
</dbReference>
<dbReference type="InterPro" id="IPR013842">
    <property type="entry name" value="LepA_CTD"/>
</dbReference>
<dbReference type="InterPro" id="IPR035654">
    <property type="entry name" value="LepA_IV"/>
</dbReference>
<dbReference type="InterPro" id="IPR027417">
    <property type="entry name" value="P-loop_NTPase"/>
</dbReference>
<dbReference type="InterPro" id="IPR005225">
    <property type="entry name" value="Small_GTP-bd"/>
</dbReference>
<dbReference type="InterPro" id="IPR000795">
    <property type="entry name" value="T_Tr_GTP-bd_dom"/>
</dbReference>
<dbReference type="InterPro" id="IPR009000">
    <property type="entry name" value="Transl_B-barrel_sf"/>
</dbReference>
<dbReference type="NCBIfam" id="TIGR01393">
    <property type="entry name" value="lepA"/>
    <property type="match status" value="1"/>
</dbReference>
<dbReference type="NCBIfam" id="TIGR00231">
    <property type="entry name" value="small_GTP"/>
    <property type="match status" value="1"/>
</dbReference>
<dbReference type="PANTHER" id="PTHR43512:SF4">
    <property type="entry name" value="TRANSLATION FACTOR GUF1 HOMOLOG, CHLOROPLASTIC"/>
    <property type="match status" value="1"/>
</dbReference>
<dbReference type="PANTHER" id="PTHR43512">
    <property type="entry name" value="TRANSLATION FACTOR GUF1-RELATED"/>
    <property type="match status" value="1"/>
</dbReference>
<dbReference type="Pfam" id="PF00679">
    <property type="entry name" value="EFG_C"/>
    <property type="match status" value="1"/>
</dbReference>
<dbReference type="Pfam" id="PF00009">
    <property type="entry name" value="GTP_EFTU"/>
    <property type="match status" value="1"/>
</dbReference>
<dbReference type="Pfam" id="PF03144">
    <property type="entry name" value="GTP_EFTU_D2"/>
    <property type="match status" value="1"/>
</dbReference>
<dbReference type="Pfam" id="PF06421">
    <property type="entry name" value="LepA_C"/>
    <property type="match status" value="1"/>
</dbReference>
<dbReference type="PRINTS" id="PR00315">
    <property type="entry name" value="ELONGATNFCT"/>
</dbReference>
<dbReference type="SMART" id="SM00838">
    <property type="entry name" value="EFG_C"/>
    <property type="match status" value="1"/>
</dbReference>
<dbReference type="SUPFAM" id="SSF54980">
    <property type="entry name" value="EF-G C-terminal domain-like"/>
    <property type="match status" value="2"/>
</dbReference>
<dbReference type="SUPFAM" id="SSF52540">
    <property type="entry name" value="P-loop containing nucleoside triphosphate hydrolases"/>
    <property type="match status" value="1"/>
</dbReference>
<dbReference type="SUPFAM" id="SSF50447">
    <property type="entry name" value="Translation proteins"/>
    <property type="match status" value="1"/>
</dbReference>
<dbReference type="PROSITE" id="PS00301">
    <property type="entry name" value="G_TR_1"/>
    <property type="match status" value="1"/>
</dbReference>
<dbReference type="PROSITE" id="PS51722">
    <property type="entry name" value="G_TR_2"/>
    <property type="match status" value="1"/>
</dbReference>
<accession>B7GRY7</accession>
<accession>E8MKP2</accession>
<reference key="1">
    <citation type="journal article" date="2008" name="Proc. Natl. Acad. Sci. U.S.A.">
        <title>The genome sequence of Bifidobacterium longum subsp. infantis reveals adaptations for milk utilization within the infant microbiome.</title>
        <authorList>
            <person name="Sela D.A."/>
            <person name="Chapman J."/>
            <person name="Adeuya A."/>
            <person name="Kim J.H."/>
            <person name="Chen F."/>
            <person name="Whitehead T.R."/>
            <person name="Lapidus A."/>
            <person name="Rokhsar D.S."/>
            <person name="Lebrilla C.B."/>
            <person name="German J.B."/>
            <person name="Price N.P."/>
            <person name="Richardson P.M."/>
            <person name="Mills D.A."/>
        </authorList>
    </citation>
    <scope>NUCLEOTIDE SEQUENCE [LARGE SCALE GENOMIC DNA]</scope>
    <source>
        <strain>ATCC 15697 / DSM 20088 / JCM 1222 / NCTC 11817 / S12</strain>
    </source>
</reference>
<reference key="2">
    <citation type="journal article" date="2011" name="Nature">
        <title>Bifidobacteria can protect from enteropathogenic infection through production of acetate.</title>
        <authorList>
            <person name="Fukuda S."/>
            <person name="Toh H."/>
            <person name="Hase K."/>
            <person name="Oshima K."/>
            <person name="Nakanishi Y."/>
            <person name="Yoshimura K."/>
            <person name="Tobe T."/>
            <person name="Clarke J.M."/>
            <person name="Topping D.L."/>
            <person name="Suzuki T."/>
            <person name="Taylor T.D."/>
            <person name="Itoh K."/>
            <person name="Kikuchi J."/>
            <person name="Morita H."/>
            <person name="Hattori M."/>
            <person name="Ohno H."/>
        </authorList>
    </citation>
    <scope>NUCLEOTIDE SEQUENCE [LARGE SCALE GENOMIC DNA]</scope>
    <source>
        <strain>ATCC 15697 / DSM 20088 / JCM 1222 / NCTC 11817 / S12</strain>
    </source>
</reference>
<proteinExistence type="inferred from homology"/>
<name>LEPA_BIFLS</name>